<comment type="function">
    <text evidence="1">Catalyzes the reversible transamination between alanine and 2-oxoglutarate to form pyruvate and glutamate. Participates in cellular nitrogen metabolism and also in liver gluconeogenesis starting with precursors transported from skeletal muscles (By similarity).</text>
</comment>
<comment type="catalytic activity">
    <reaction>
        <text>L-alanine + 2-oxoglutarate = pyruvate + L-glutamate</text>
        <dbReference type="Rhea" id="RHEA:19453"/>
        <dbReference type="ChEBI" id="CHEBI:15361"/>
        <dbReference type="ChEBI" id="CHEBI:16810"/>
        <dbReference type="ChEBI" id="CHEBI:29985"/>
        <dbReference type="ChEBI" id="CHEBI:57972"/>
        <dbReference type="EC" id="2.6.1.2"/>
    </reaction>
</comment>
<comment type="cofactor">
    <cofactor>
        <name>pyridoxal 5'-phosphate</name>
        <dbReference type="ChEBI" id="CHEBI:597326"/>
    </cofactor>
</comment>
<comment type="pathway">
    <text>Amino-acid degradation; L-alanine degradation via transaminase pathway; pyruvate from L-alanine: step 1/1.</text>
</comment>
<comment type="subunit">
    <text>Homodimer.</text>
</comment>
<comment type="subcellular location">
    <subcellularLocation>
        <location>Cytoplasm</location>
    </subcellularLocation>
</comment>
<comment type="tissue specificity">
    <text evidence="2">Liver, kidney, heart, and skeletal muscles. Expressed at moderate levels in the adipose tissue.</text>
</comment>
<comment type="induction">
    <text>By glucocorticoids.</text>
</comment>
<comment type="similarity">
    <text evidence="7">Belongs to the class-I pyridoxal-phosphate-dependent aminotransferase family. Alanine aminotransferase subfamily.</text>
</comment>
<comment type="online information" name="Wikipedia">
    <link uri="https://en.wikipedia.org/wiki/Alanine_transaminase"/>
    <text>Alanine transaminase entry</text>
</comment>
<evidence type="ECO:0000250" key="1"/>
<evidence type="ECO:0000269" key="2">
    <source>
    </source>
</evidence>
<evidence type="ECO:0000269" key="3">
    <source>
    </source>
</evidence>
<evidence type="ECO:0000269" key="4">
    <source>
    </source>
</evidence>
<evidence type="ECO:0000269" key="5">
    <source>
    </source>
</evidence>
<evidence type="ECO:0000269" key="6">
    <source ref="4"/>
</evidence>
<evidence type="ECO:0000305" key="7"/>
<evidence type="ECO:0007744" key="8">
    <source>
    </source>
</evidence>
<protein>
    <recommendedName>
        <fullName>Alanine aminotransferase 1</fullName>
        <shortName>ALT1</shortName>
        <ecNumber>2.6.1.2</ecNumber>
    </recommendedName>
    <alternativeName>
        <fullName>Glutamate pyruvate transaminase 1</fullName>
        <shortName>GPT 1</shortName>
    </alternativeName>
    <alternativeName>
        <fullName>Glutamic--alanine transaminase 1</fullName>
    </alternativeName>
    <alternativeName>
        <fullName>Glutamic--pyruvic transaminase 1</fullName>
    </alternativeName>
</protein>
<keyword id="KW-0007">Acetylation</keyword>
<keyword id="KW-0032">Aminotransferase</keyword>
<keyword id="KW-0963">Cytoplasm</keyword>
<keyword id="KW-0903">Direct protein sequencing</keyword>
<keyword id="KW-0597">Phosphoprotein</keyword>
<keyword id="KW-1267">Proteomics identification</keyword>
<keyword id="KW-0663">Pyridoxal phosphate</keyword>
<keyword id="KW-1185">Reference proteome</keyword>
<keyword id="KW-0808">Transferase</keyword>
<gene>
    <name type="primary">GPT</name>
    <name type="synonym">AAT1</name>
    <name type="synonym">GPT1</name>
</gene>
<name>ALAT1_HUMAN</name>
<proteinExistence type="evidence at protein level"/>
<accession>P24298</accession>
<accession>B0YJ18</accession>
<accession>D3DWM7</accession>
<accession>P78398</accession>
<accession>Q93076</accession>
<sequence>MASSTGDRSQAVRHGLRAKVLTLDGMNPRVRRVEYAVRGPIVQRALELEQELRQGVKKPFTEVIRANIGDAQAMGQRPITFLRQVLALCVNPDLLSSPNFPDDAKKRAERILQACGGHSLGAYSVSSGIQLIREDVARYIERRDGGIPADPNNVFLSTGASDAIVTVLKLLVAGEGHTRTGVLIPIPQYPLYSATLAELGAVQVDYYLDEERAWALDVAELHRALGQARDHCRPRALCVINPGNPTGQVQTRECIEAVIRFAFEERLFLLADEVYQDNVYAAGSQFHSFKKVLMEMGPPYAGQQELASFHSTSKGYMGECGFRGGYVEVVNMDAAVQQQMLKLMSVRLCPPVPGQALLDLVVSPPAPTDPSFAQFQAEKQAVLAELAAKAKLTEQVFNEAPGISCNPVQGAMYSFPRVQLPPRAVERAQELGLAPDMFFCLRLLEETGICVVPGSGFGQREGTYHFRMTILPPLEKLRLLLEKLSRFHAKFTLEYS</sequence>
<feature type="initiator methionine" description="Removed" evidence="3">
    <location>
        <position position="1"/>
    </location>
</feature>
<feature type="chain" id="PRO_0000123933" description="Alanine aminotransferase 1">
    <location>
        <begin position="2"/>
        <end position="496"/>
    </location>
</feature>
<feature type="modified residue" description="N-acetylalanine" evidence="3">
    <location>
        <position position="2"/>
    </location>
</feature>
<feature type="modified residue" description="Phosphothreonine" evidence="8">
    <location>
        <position position="22"/>
    </location>
</feature>
<feature type="modified residue" description="N6-(pyridoxal phosphate)lysine" evidence="1">
    <location>
        <position position="314"/>
    </location>
</feature>
<feature type="sequence variant" id="VAR_000561" description="In allele GPT*2; dbSNP:rs1063739." evidence="5 6">
    <original>H</original>
    <variation>N</variation>
    <location>
        <position position="14"/>
    </location>
</feature>
<feature type="sequence variant" id="VAR_075711" description="Found in patient with Joubert syndrome; uncertain significance; dbSNP:rs141505249." evidence="4">
    <original>E</original>
    <variation>Q</variation>
    <location>
        <position position="430"/>
    </location>
</feature>
<feature type="sequence variant" id="VAR_075712" description="Found in patient with Joubert syndrome; uncertain significance; dbSNP:rs147998249." evidence="4">
    <original>V</original>
    <variation>L</variation>
    <location>
        <position position="452"/>
    </location>
</feature>
<feature type="sequence conflict" description="In Ref. 7; BAA01186." evidence="7" ref="7">
    <original>STGD</original>
    <variation>RRGN</variation>
    <location>
        <begin position="4"/>
        <end position="7"/>
    </location>
</feature>
<feature type="sequence conflict" description="In Ref. 7; BAA01186." evidence="7" ref="7">
    <original>G</original>
    <variation>S</variation>
    <location>
        <position position="39"/>
    </location>
</feature>
<feature type="sequence conflict" description="In Ref. 6; AA sequence." evidence="7" ref="6">
    <original>H</original>
    <variation>A</variation>
    <location>
        <position position="222"/>
    </location>
</feature>
<dbReference type="EC" id="2.6.1.2"/>
<dbReference type="EMBL" id="U70732">
    <property type="protein sequence ID" value="AAC51155.1"/>
    <property type="molecule type" value="Genomic_DNA"/>
</dbReference>
<dbReference type="EMBL" id="BT006992">
    <property type="protein sequence ID" value="AAP35638.1"/>
    <property type="molecule type" value="mRNA"/>
</dbReference>
<dbReference type="EMBL" id="EF444981">
    <property type="protein sequence ID" value="ACA05996.1"/>
    <property type="molecule type" value="Genomic_DNA"/>
</dbReference>
<dbReference type="EMBL" id="CH471162">
    <property type="protein sequence ID" value="EAW82077.1"/>
    <property type="molecule type" value="Genomic_DNA"/>
</dbReference>
<dbReference type="EMBL" id="CH471162">
    <property type="protein sequence ID" value="EAW82078.1"/>
    <property type="molecule type" value="Genomic_DNA"/>
</dbReference>
<dbReference type="EMBL" id="BC018207">
    <property type="protein sequence ID" value="AAH18207.1"/>
    <property type="molecule type" value="mRNA"/>
</dbReference>
<dbReference type="EMBL" id="D10355">
    <property type="protein sequence ID" value="BAA01186.1"/>
    <property type="molecule type" value="mRNA"/>
</dbReference>
<dbReference type="CCDS" id="CCDS6430.1"/>
<dbReference type="PIR" id="A40465">
    <property type="entry name" value="A40465"/>
</dbReference>
<dbReference type="RefSeq" id="NP_001369593.1">
    <property type="nucleotide sequence ID" value="NM_001382664.1"/>
</dbReference>
<dbReference type="RefSeq" id="NP_001369594.1">
    <property type="nucleotide sequence ID" value="NM_001382665.1"/>
</dbReference>
<dbReference type="RefSeq" id="NP_005300.1">
    <property type="nucleotide sequence ID" value="NM_005309.3"/>
</dbReference>
<dbReference type="RefSeq" id="XP_011515295.1">
    <property type="nucleotide sequence ID" value="XM_011516993.2"/>
</dbReference>
<dbReference type="SMR" id="P24298"/>
<dbReference type="BioGRID" id="109133">
    <property type="interactions" value="16"/>
</dbReference>
<dbReference type="FunCoup" id="P24298">
    <property type="interactions" value="765"/>
</dbReference>
<dbReference type="IntAct" id="P24298">
    <property type="interactions" value="8"/>
</dbReference>
<dbReference type="STRING" id="9606.ENSP00000378408"/>
<dbReference type="ChEMBL" id="CHEMBL5929"/>
<dbReference type="DrugBank" id="DB00160">
    <property type="generic name" value="Alanine"/>
</dbReference>
<dbReference type="DrugBank" id="DB00142">
    <property type="generic name" value="Glutamic acid"/>
</dbReference>
<dbReference type="DrugBank" id="DB00780">
    <property type="generic name" value="Phenelzine"/>
</dbReference>
<dbReference type="DrugBank" id="DB00114">
    <property type="generic name" value="Pyridoxal phosphate"/>
</dbReference>
<dbReference type="GlyGen" id="P24298">
    <property type="glycosylation" value="3 sites"/>
</dbReference>
<dbReference type="iPTMnet" id="P24298"/>
<dbReference type="PhosphoSitePlus" id="P24298"/>
<dbReference type="BioMuta" id="GPT"/>
<dbReference type="DMDM" id="46577683"/>
<dbReference type="jPOST" id="P24298"/>
<dbReference type="MassIVE" id="P24298"/>
<dbReference type="PaxDb" id="9606-ENSP00000378408"/>
<dbReference type="PeptideAtlas" id="P24298"/>
<dbReference type="ProteomicsDB" id="54194"/>
<dbReference type="Antibodypedia" id="14920">
    <property type="antibodies" value="405 antibodies from 31 providers"/>
</dbReference>
<dbReference type="DNASU" id="2875"/>
<dbReference type="Ensembl" id="ENST00000394955.3">
    <property type="protein sequence ID" value="ENSP00000378408.2"/>
    <property type="gene ID" value="ENSG00000167701.14"/>
</dbReference>
<dbReference type="Ensembl" id="ENST00000528431.5">
    <property type="protein sequence ID" value="ENSP00000433586.1"/>
    <property type="gene ID" value="ENSG00000167701.14"/>
</dbReference>
<dbReference type="GeneID" id="2875"/>
<dbReference type="KEGG" id="hsa:2875"/>
<dbReference type="MANE-Select" id="ENST00000394955.3">
    <property type="protein sequence ID" value="ENSP00000378408.2"/>
    <property type="RefSeq nucleotide sequence ID" value="NM_005309.3"/>
    <property type="RefSeq protein sequence ID" value="NP_005300.1"/>
</dbReference>
<dbReference type="UCSC" id="uc003zdh.5">
    <property type="organism name" value="human"/>
</dbReference>
<dbReference type="AGR" id="HGNC:4552"/>
<dbReference type="CTD" id="2875"/>
<dbReference type="DisGeNET" id="2875"/>
<dbReference type="GeneCards" id="GPT"/>
<dbReference type="HGNC" id="HGNC:4552">
    <property type="gene designation" value="GPT"/>
</dbReference>
<dbReference type="HPA" id="ENSG00000167701">
    <property type="expression patterns" value="Tissue enhanced (liver)"/>
</dbReference>
<dbReference type="MIM" id="138200">
    <property type="type" value="gene"/>
</dbReference>
<dbReference type="neXtProt" id="NX_P24298"/>
<dbReference type="OpenTargets" id="ENSG00000167701"/>
<dbReference type="PharmGKB" id="PA28947"/>
<dbReference type="VEuPathDB" id="HostDB:ENSG00000167701"/>
<dbReference type="eggNOG" id="KOG0258">
    <property type="taxonomic scope" value="Eukaryota"/>
</dbReference>
<dbReference type="GeneTree" id="ENSGT00940000155265"/>
<dbReference type="HOGENOM" id="CLU_014254_3_1_1"/>
<dbReference type="InParanoid" id="P24298"/>
<dbReference type="OMA" id="GTQHFRV"/>
<dbReference type="OrthoDB" id="1732682at2759"/>
<dbReference type="PAN-GO" id="P24298">
    <property type="GO annotations" value="0 GO annotations based on evolutionary models"/>
</dbReference>
<dbReference type="PhylomeDB" id="P24298"/>
<dbReference type="TreeFam" id="TF300839"/>
<dbReference type="BioCyc" id="MetaCyc:HS09610-MONOMER"/>
<dbReference type="BRENDA" id="2.6.1.2">
    <property type="organism ID" value="2681"/>
</dbReference>
<dbReference type="BRENDA" id="2.6.1.4">
    <property type="organism ID" value="2681"/>
</dbReference>
<dbReference type="PathwayCommons" id="P24298"/>
<dbReference type="Reactome" id="R-HSA-70268">
    <property type="pathway name" value="Pyruvate metabolism"/>
</dbReference>
<dbReference type="Reactome" id="R-HSA-8964540">
    <property type="pathway name" value="Alanine metabolism"/>
</dbReference>
<dbReference type="SignaLink" id="P24298"/>
<dbReference type="UniPathway" id="UPA00528">
    <property type="reaction ID" value="UER00586"/>
</dbReference>
<dbReference type="BioGRID-ORCS" id="2875">
    <property type="hits" value="12 hits in 1146 CRISPR screens"/>
</dbReference>
<dbReference type="GenomeRNAi" id="2875"/>
<dbReference type="Pharos" id="P24298">
    <property type="development level" value="Tbio"/>
</dbReference>
<dbReference type="PRO" id="PR:P24298"/>
<dbReference type="Proteomes" id="UP000005640">
    <property type="component" value="Chromosome 8"/>
</dbReference>
<dbReference type="RNAct" id="P24298">
    <property type="molecule type" value="protein"/>
</dbReference>
<dbReference type="Bgee" id="ENSG00000167701">
    <property type="expression patterns" value="Expressed in right lobe of liver and 110 other cell types or tissues"/>
</dbReference>
<dbReference type="GO" id="GO:0005829">
    <property type="term" value="C:cytosol"/>
    <property type="evidence" value="ECO:0000304"/>
    <property type="project" value="Reactome"/>
</dbReference>
<dbReference type="GO" id="GO:0070062">
    <property type="term" value="C:extracellular exosome"/>
    <property type="evidence" value="ECO:0007005"/>
    <property type="project" value="UniProtKB"/>
</dbReference>
<dbReference type="GO" id="GO:0004021">
    <property type="term" value="F:L-alanine:2-oxoglutarate aminotransferase activity"/>
    <property type="evidence" value="ECO:0000303"/>
    <property type="project" value="UniProtKB"/>
</dbReference>
<dbReference type="GO" id="GO:0030170">
    <property type="term" value="F:pyridoxal phosphate binding"/>
    <property type="evidence" value="ECO:0007669"/>
    <property type="project" value="InterPro"/>
</dbReference>
<dbReference type="GO" id="GO:0009058">
    <property type="term" value="P:biosynthetic process"/>
    <property type="evidence" value="ECO:0007669"/>
    <property type="project" value="InterPro"/>
</dbReference>
<dbReference type="GO" id="GO:0042853">
    <property type="term" value="P:L-alanine catabolic process"/>
    <property type="evidence" value="ECO:0007669"/>
    <property type="project" value="UniProtKB-UniPathway"/>
</dbReference>
<dbReference type="CDD" id="cd00609">
    <property type="entry name" value="AAT_like"/>
    <property type="match status" value="1"/>
</dbReference>
<dbReference type="FunFam" id="1.10.287.1970:FF:000001">
    <property type="entry name" value="Alanine aminotransferase 2"/>
    <property type="match status" value="1"/>
</dbReference>
<dbReference type="FunFam" id="3.40.640.10:FF:000236">
    <property type="entry name" value="Alanine aminotransferase 2"/>
    <property type="match status" value="1"/>
</dbReference>
<dbReference type="FunFam" id="3.90.1150.10:FF:000345">
    <property type="entry name" value="Alanine aminotransferase 2"/>
    <property type="match status" value="1"/>
</dbReference>
<dbReference type="Gene3D" id="1.10.287.1970">
    <property type="match status" value="1"/>
</dbReference>
<dbReference type="Gene3D" id="3.90.1150.10">
    <property type="entry name" value="Aspartate Aminotransferase, domain 1"/>
    <property type="match status" value="1"/>
</dbReference>
<dbReference type="Gene3D" id="3.40.640.10">
    <property type="entry name" value="Type I PLP-dependent aspartate aminotransferase-like (Major domain)"/>
    <property type="match status" value="1"/>
</dbReference>
<dbReference type="InterPro" id="IPR045088">
    <property type="entry name" value="ALAT1/2-like"/>
</dbReference>
<dbReference type="InterPro" id="IPR004839">
    <property type="entry name" value="Aminotransferase_I/II_large"/>
</dbReference>
<dbReference type="InterPro" id="IPR015424">
    <property type="entry name" value="PyrdxlP-dep_Trfase"/>
</dbReference>
<dbReference type="InterPro" id="IPR015421">
    <property type="entry name" value="PyrdxlP-dep_Trfase_major"/>
</dbReference>
<dbReference type="InterPro" id="IPR015422">
    <property type="entry name" value="PyrdxlP-dep_Trfase_small"/>
</dbReference>
<dbReference type="PANTHER" id="PTHR11751">
    <property type="entry name" value="ALANINE AMINOTRANSFERASE"/>
    <property type="match status" value="1"/>
</dbReference>
<dbReference type="PANTHER" id="PTHR11751:SF308">
    <property type="entry name" value="ALANINE AMINOTRANSFERASE 1"/>
    <property type="match status" value="1"/>
</dbReference>
<dbReference type="Pfam" id="PF00155">
    <property type="entry name" value="Aminotran_1_2"/>
    <property type="match status" value="1"/>
</dbReference>
<dbReference type="SUPFAM" id="SSF53383">
    <property type="entry name" value="PLP-dependent transferases"/>
    <property type="match status" value="1"/>
</dbReference>
<organism>
    <name type="scientific">Homo sapiens</name>
    <name type="common">Human</name>
    <dbReference type="NCBI Taxonomy" id="9606"/>
    <lineage>
        <taxon>Eukaryota</taxon>
        <taxon>Metazoa</taxon>
        <taxon>Chordata</taxon>
        <taxon>Craniata</taxon>
        <taxon>Vertebrata</taxon>
        <taxon>Euteleostomi</taxon>
        <taxon>Mammalia</taxon>
        <taxon>Eutheria</taxon>
        <taxon>Euarchontoglires</taxon>
        <taxon>Primates</taxon>
        <taxon>Haplorrhini</taxon>
        <taxon>Catarrhini</taxon>
        <taxon>Hominidae</taxon>
        <taxon>Homo</taxon>
    </lineage>
</organism>
<reference key="1">
    <citation type="journal article" date="1997" name="Genomics">
        <title>Human glutamate pyruvate transaminase (GPT): localization to 8q24.3, cDNA and genomic sequences, and polymorphic sites.</title>
        <authorList>
            <person name="Sohocki M.M."/>
            <person name="Sullivan L.S."/>
            <person name="Harrison W.R."/>
            <person name="Sodergren E.J."/>
            <person name="Elder F.F.B."/>
            <person name="Weinstock G."/>
            <person name="Tanase S."/>
            <person name="Daiger S.P."/>
        </authorList>
    </citation>
    <scope>NUCLEOTIDE SEQUENCE [GENOMIC DNA]</scope>
    <scope>VARIANT ASN-14</scope>
</reference>
<reference key="2">
    <citation type="submission" date="2003-05" db="EMBL/GenBank/DDBJ databases">
        <title>Cloning of human full-length CDSs in BD Creator(TM) system donor vector.</title>
        <authorList>
            <person name="Kalnine N."/>
            <person name="Chen X."/>
            <person name="Rolfs A."/>
            <person name="Halleck A."/>
            <person name="Hines L."/>
            <person name="Eisenstein S."/>
            <person name="Koundinya M."/>
            <person name="Raphael J."/>
            <person name="Moreira D."/>
            <person name="Kelley T."/>
            <person name="LaBaer J."/>
            <person name="Lin Y."/>
            <person name="Phelan M."/>
            <person name="Farmer A."/>
        </authorList>
    </citation>
    <scope>NUCLEOTIDE SEQUENCE [LARGE SCALE MRNA]</scope>
</reference>
<reference key="3">
    <citation type="submission" date="2007-02" db="EMBL/GenBank/DDBJ databases">
        <authorList>
            <consortium name="NHLBI resequencing and genotyping service (RS&amp;G)"/>
        </authorList>
    </citation>
    <scope>NUCLEOTIDE SEQUENCE [GENOMIC DNA]</scope>
</reference>
<reference key="4">
    <citation type="submission" date="2005-09" db="EMBL/GenBank/DDBJ databases">
        <authorList>
            <person name="Mural R.J."/>
            <person name="Istrail S."/>
            <person name="Sutton G.G."/>
            <person name="Florea L."/>
            <person name="Halpern A.L."/>
            <person name="Mobarry C.M."/>
            <person name="Lippert R."/>
            <person name="Walenz B."/>
            <person name="Shatkay H."/>
            <person name="Dew I."/>
            <person name="Miller J.R."/>
            <person name="Flanigan M.J."/>
            <person name="Edwards N.J."/>
            <person name="Bolanos R."/>
            <person name="Fasulo D."/>
            <person name="Halldorsson B.V."/>
            <person name="Hannenhalli S."/>
            <person name="Turner R."/>
            <person name="Yooseph S."/>
            <person name="Lu F."/>
            <person name="Nusskern D.R."/>
            <person name="Shue B.C."/>
            <person name="Zheng X.H."/>
            <person name="Zhong F."/>
            <person name="Delcher A.L."/>
            <person name="Huson D.H."/>
            <person name="Kravitz S.A."/>
            <person name="Mouchard L."/>
            <person name="Reinert K."/>
            <person name="Remington K.A."/>
            <person name="Clark A.G."/>
            <person name="Waterman M.S."/>
            <person name="Eichler E.E."/>
            <person name="Adams M.D."/>
            <person name="Hunkapiller M.W."/>
            <person name="Myers E.W."/>
            <person name="Venter J.C."/>
        </authorList>
    </citation>
    <scope>NUCLEOTIDE SEQUENCE [LARGE SCALE GENOMIC DNA]</scope>
    <scope>VARIANT ASN-14</scope>
</reference>
<reference key="5">
    <citation type="journal article" date="2004" name="Genome Res.">
        <title>The status, quality, and expansion of the NIH full-length cDNA project: the Mammalian Gene Collection (MGC).</title>
        <authorList>
            <consortium name="The MGC Project Team"/>
        </authorList>
    </citation>
    <scope>NUCLEOTIDE SEQUENCE [LARGE SCALE MRNA]</scope>
    <source>
        <tissue>Brain</tissue>
    </source>
</reference>
<reference key="6">
    <citation type="journal article" date="1991" name="Biochemistry">
        <title>Complete amino acid sequence of human liver cytosolic alanine aminotransferase (GPT) determined by a combination of conventional and mass spectral methods.</title>
        <authorList>
            <person name="Ishiguro M."/>
            <person name="Takio K."/>
            <person name="Suzuki M."/>
            <person name="Oyama R."/>
            <person name="Matsuzawa T."/>
            <person name="Titani K."/>
        </authorList>
    </citation>
    <scope>PROTEIN SEQUENCE OF 2-496</scope>
    <scope>CLEAVAGE OF INITIATOR METHIONINE</scope>
    <scope>ACETYLATION AT ALA-2</scope>
    <source>
        <tissue>Liver</tissue>
    </source>
</reference>
<reference key="7">
    <citation type="submission" date="1996-08" db="EMBL/GenBank/DDBJ databases">
        <title>Human mRNA for alanine aminotransferase.</title>
        <authorList>
            <person name="Funatsu M."/>
            <person name="Tanase S."/>
            <person name="Nakao J."/>
            <person name="Hamada F."/>
            <person name="Oka T."/>
            <person name="Morino Y."/>
        </authorList>
    </citation>
    <scope>NUCLEOTIDE SEQUENCE [MRNA] OF 4-496</scope>
    <source>
        <tissue>Liver</tissue>
    </source>
</reference>
<reference key="8">
    <citation type="journal article" date="2002" name="Genomics">
        <title>cDNA cloning, genomic structure, chromosomal mapping, and functional expression of a novel human alanine aminotransferase.</title>
        <authorList>
            <person name="Yang R.-Z."/>
            <person name="Blaileanu G."/>
            <person name="Hansen B.C."/>
            <person name="Shuldiner A.R."/>
            <person name="Gong D.-W."/>
        </authorList>
    </citation>
    <scope>TISSUE SPECIFICITY</scope>
</reference>
<reference key="9">
    <citation type="journal article" date="2014" name="J. Proteomics">
        <title>An enzyme assisted RP-RPLC approach for in-depth analysis of human liver phosphoproteome.</title>
        <authorList>
            <person name="Bian Y."/>
            <person name="Song C."/>
            <person name="Cheng K."/>
            <person name="Dong M."/>
            <person name="Wang F."/>
            <person name="Huang J."/>
            <person name="Sun D."/>
            <person name="Wang L."/>
            <person name="Ye M."/>
            <person name="Zou H."/>
        </authorList>
    </citation>
    <scope>PHOSPHORYLATION [LARGE SCALE ANALYSIS] AT THR-22</scope>
    <scope>IDENTIFICATION BY MASS SPECTROMETRY [LARGE SCALE ANALYSIS]</scope>
    <source>
        <tissue>Liver</tissue>
    </source>
</reference>
<reference key="10">
    <citation type="journal article" date="2015" name="Am. J. Hum. Genet.">
        <title>Joubert Syndrome in French Canadians and Identification of Mutations in CEP104.</title>
        <authorList>
            <consortium name="Care4Rare Canada Consortium"/>
            <person name="Srour M."/>
            <person name="Hamdan F.F."/>
            <person name="McKnight D."/>
            <person name="Davis E."/>
            <person name="Mandel H."/>
            <person name="Schwartzentruber J."/>
            <person name="Martin B."/>
            <person name="Patry L."/>
            <person name="Nassif C."/>
            <person name="Dionne-Laporte A."/>
            <person name="Ospina L.H."/>
            <person name="Lemyre E."/>
            <person name="Massicotte C."/>
            <person name="Laframboise R."/>
            <person name="Maranda B."/>
            <person name="Labuda D."/>
            <person name="Decarie J.C."/>
            <person name="Rypens F."/>
            <person name="Goldsher D."/>
            <person name="Fallet-Bianco C."/>
            <person name="Soucy J.F."/>
            <person name="Laberge A.M."/>
            <person name="Maftei C."/>
            <person name="Boycott K."/>
            <person name="Brais B."/>
            <person name="Boucher R.M."/>
            <person name="Rouleau G.A."/>
            <person name="Katsanis N."/>
            <person name="Majewski J."/>
            <person name="Elpeleg O."/>
            <person name="Kukolich M.K."/>
            <person name="Shalev S."/>
            <person name="Michaud J.L."/>
        </authorList>
    </citation>
    <scope>VARIANTS GLN-430 AND LEU-452</scope>
</reference>